<reference key="1">
    <citation type="journal article" date="2006" name="J. Bacteriol.">
        <title>Pathogenomic sequence analysis of Bacillus cereus and Bacillus thuringiensis isolates closely related to Bacillus anthracis.</title>
        <authorList>
            <person name="Han C.S."/>
            <person name="Xie G."/>
            <person name="Challacombe J.F."/>
            <person name="Altherr M.R."/>
            <person name="Bhotika S.S."/>
            <person name="Bruce D."/>
            <person name="Campbell C.S."/>
            <person name="Campbell M.L."/>
            <person name="Chen J."/>
            <person name="Chertkov O."/>
            <person name="Cleland C."/>
            <person name="Dimitrijevic M."/>
            <person name="Doggett N.A."/>
            <person name="Fawcett J.J."/>
            <person name="Glavina T."/>
            <person name="Goodwin L.A."/>
            <person name="Hill K.K."/>
            <person name="Hitchcock P."/>
            <person name="Jackson P.J."/>
            <person name="Keim P."/>
            <person name="Kewalramani A.R."/>
            <person name="Longmire J."/>
            <person name="Lucas S."/>
            <person name="Malfatti S."/>
            <person name="McMurry K."/>
            <person name="Meincke L.J."/>
            <person name="Misra M."/>
            <person name="Moseman B.L."/>
            <person name="Mundt M."/>
            <person name="Munk A.C."/>
            <person name="Okinaka R.T."/>
            <person name="Parson-Quintana B."/>
            <person name="Reilly L.P."/>
            <person name="Richardson P."/>
            <person name="Robinson D.L."/>
            <person name="Rubin E."/>
            <person name="Saunders E."/>
            <person name="Tapia R."/>
            <person name="Tesmer J.G."/>
            <person name="Thayer N."/>
            <person name="Thompson L.S."/>
            <person name="Tice H."/>
            <person name="Ticknor L.O."/>
            <person name="Wills P.L."/>
            <person name="Brettin T.S."/>
            <person name="Gilna P."/>
        </authorList>
    </citation>
    <scope>NUCLEOTIDE SEQUENCE [LARGE SCALE GENOMIC DNA]</scope>
    <source>
        <strain>97-27</strain>
    </source>
</reference>
<dbReference type="EC" id="2.5.1.n9" evidence="1"/>
<dbReference type="EMBL" id="AE017355">
    <property type="protein sequence ID" value="AAT61282.1"/>
    <property type="molecule type" value="Genomic_DNA"/>
</dbReference>
<dbReference type="RefSeq" id="WP_000272088.1">
    <property type="nucleotide sequence ID" value="NC_005957.1"/>
</dbReference>
<dbReference type="RefSeq" id="YP_034624.1">
    <property type="nucleotide sequence ID" value="NC_005957.1"/>
</dbReference>
<dbReference type="SMR" id="Q6HP96"/>
<dbReference type="KEGG" id="btk:BT9727_0274"/>
<dbReference type="PATRIC" id="fig|281309.8.peg.292"/>
<dbReference type="HOGENOM" id="CLU_095211_0_0_9"/>
<dbReference type="UniPathway" id="UPA00940"/>
<dbReference type="Proteomes" id="UP000001301">
    <property type="component" value="Chromosome"/>
</dbReference>
<dbReference type="GO" id="GO:0120536">
    <property type="term" value="F:heptaprenylglyceryl phosphate synthase activity"/>
    <property type="evidence" value="ECO:0007669"/>
    <property type="project" value="RHEA"/>
</dbReference>
<dbReference type="GO" id="GO:0000287">
    <property type="term" value="F:magnesium ion binding"/>
    <property type="evidence" value="ECO:0007669"/>
    <property type="project" value="UniProtKB-UniRule"/>
</dbReference>
<dbReference type="GO" id="GO:0046474">
    <property type="term" value="P:glycerophospholipid biosynthetic process"/>
    <property type="evidence" value="ECO:0007669"/>
    <property type="project" value="UniProtKB-UniRule"/>
</dbReference>
<dbReference type="CDD" id="cd02812">
    <property type="entry name" value="PcrB_like"/>
    <property type="match status" value="1"/>
</dbReference>
<dbReference type="FunFam" id="3.20.20.390:FF:000001">
    <property type="entry name" value="Heptaprenylglyceryl phosphate synthase"/>
    <property type="match status" value="1"/>
</dbReference>
<dbReference type="Gene3D" id="3.20.20.390">
    <property type="entry name" value="FMN-linked oxidoreductases"/>
    <property type="match status" value="1"/>
</dbReference>
<dbReference type="HAMAP" id="MF_00112">
    <property type="entry name" value="GGGP_HepGP_synthase"/>
    <property type="match status" value="1"/>
</dbReference>
<dbReference type="InterPro" id="IPR039074">
    <property type="entry name" value="GGGP/HepGP_synthase_I"/>
</dbReference>
<dbReference type="InterPro" id="IPR038597">
    <property type="entry name" value="GGGP/HepGP_synthase_sf"/>
</dbReference>
<dbReference type="InterPro" id="IPR008205">
    <property type="entry name" value="GGGP_HepGP_synthase"/>
</dbReference>
<dbReference type="NCBIfam" id="TIGR01768">
    <property type="entry name" value="GGGP-family"/>
    <property type="match status" value="1"/>
</dbReference>
<dbReference type="NCBIfam" id="NF003197">
    <property type="entry name" value="PRK04169.1-1"/>
    <property type="match status" value="1"/>
</dbReference>
<dbReference type="NCBIfam" id="NF003199">
    <property type="entry name" value="PRK04169.1-3"/>
    <property type="match status" value="1"/>
</dbReference>
<dbReference type="PANTHER" id="PTHR40029">
    <property type="match status" value="1"/>
</dbReference>
<dbReference type="PANTHER" id="PTHR40029:SF2">
    <property type="entry name" value="HEPTAPRENYLGLYCERYL PHOSPHATE SYNTHASE"/>
    <property type="match status" value="1"/>
</dbReference>
<dbReference type="Pfam" id="PF01884">
    <property type="entry name" value="PcrB"/>
    <property type="match status" value="1"/>
</dbReference>
<dbReference type="SUPFAM" id="SSF51395">
    <property type="entry name" value="FMN-linked oxidoreductases"/>
    <property type="match status" value="1"/>
</dbReference>
<name>PCRB_BACHK</name>
<accession>Q6HP96</accession>
<keyword id="KW-0444">Lipid biosynthesis</keyword>
<keyword id="KW-0443">Lipid metabolism</keyword>
<keyword id="KW-0460">Magnesium</keyword>
<keyword id="KW-0479">Metal-binding</keyword>
<keyword id="KW-0594">Phospholipid biosynthesis</keyword>
<keyword id="KW-1208">Phospholipid metabolism</keyword>
<keyword id="KW-0808">Transferase</keyword>
<evidence type="ECO:0000255" key="1">
    <source>
        <dbReference type="HAMAP-Rule" id="MF_00112"/>
    </source>
</evidence>
<comment type="function">
    <text evidence="1">Prenyltransferase that catalyzes in vivo the transfer of the heptaprenyl moiety of heptaprenyl pyrophosphate (HepPP; 35 carbon atoms) to the C3 hydroxyl of sn-glycerol-1-phosphate (G1P), producing heptaprenylglyceryl phosphate (HepGP). This reaction is an ether-bond-formation step in the biosynthesis of archaea-type G1P-based membrane lipids found in Bacillales.</text>
</comment>
<comment type="catalytic activity">
    <reaction evidence="1">
        <text>sn-glycerol 1-phosphate + all-trans-heptaprenyl diphosphate = 3-heptaprenyl-sn-glycero-1-phosphate + diphosphate</text>
        <dbReference type="Rhea" id="RHEA:33495"/>
        <dbReference type="ChEBI" id="CHEBI:33019"/>
        <dbReference type="ChEBI" id="CHEBI:57685"/>
        <dbReference type="ChEBI" id="CHEBI:58206"/>
        <dbReference type="ChEBI" id="CHEBI:64781"/>
        <dbReference type="EC" id="2.5.1.n9"/>
    </reaction>
</comment>
<comment type="cofactor">
    <cofactor evidence="1">
        <name>Mg(2+)</name>
        <dbReference type="ChEBI" id="CHEBI:18420"/>
    </cofactor>
</comment>
<comment type="pathway">
    <text evidence="1">Membrane lipid metabolism; glycerophospholipid metabolism.</text>
</comment>
<comment type="subunit">
    <text evidence="1">Homodimer.</text>
</comment>
<comment type="similarity">
    <text evidence="1">Belongs to the GGGP/HepGP synthase family. Group I subfamily.</text>
</comment>
<proteinExistence type="inferred from homology"/>
<feature type="chain" id="PRO_0000138708" description="Heptaprenylglyceryl phosphate synthase">
    <location>
        <begin position="1"/>
        <end position="229"/>
    </location>
</feature>
<feature type="binding site" evidence="1">
    <location>
        <position position="12"/>
    </location>
    <ligand>
        <name>sn-glycerol 1-phosphate</name>
        <dbReference type="ChEBI" id="CHEBI:57685"/>
    </ligand>
</feature>
<feature type="binding site" evidence="1">
    <location>
        <position position="14"/>
    </location>
    <ligand>
        <name>Mg(2+)</name>
        <dbReference type="ChEBI" id="CHEBI:18420"/>
    </ligand>
</feature>
<feature type="binding site" evidence="1">
    <location>
        <position position="40"/>
    </location>
    <ligand>
        <name>Mg(2+)</name>
        <dbReference type="ChEBI" id="CHEBI:18420"/>
    </ligand>
</feature>
<feature type="binding site" evidence="1">
    <location>
        <begin position="159"/>
        <end position="164"/>
    </location>
    <ligand>
        <name>sn-glycerol 1-phosphate</name>
        <dbReference type="ChEBI" id="CHEBI:57685"/>
    </ligand>
</feature>
<feature type="binding site" evidence="1">
    <location>
        <position position="189"/>
    </location>
    <ligand>
        <name>sn-glycerol 1-phosphate</name>
        <dbReference type="ChEBI" id="CHEBI:57685"/>
    </ligand>
</feature>
<feature type="binding site" evidence="1">
    <location>
        <begin position="209"/>
        <end position="210"/>
    </location>
    <ligand>
        <name>sn-glycerol 1-phosphate</name>
        <dbReference type="ChEBI" id="CHEBI:57685"/>
    </ligand>
</feature>
<sequence>MYDISGWKHVFKLDPNKELSDEHLEMICESGTDAVIVGGSDGVTIDNVLHMLVSIRRYAVPCVLEVSDVEAITPGFDFYYIPSVLNSRKVEWVTGVHHEALKEFGDIMDWDEIFMEGYCVLNPEAKVAQLTDAKCDVTEDDVIAYARLADKLLRLPIFYLEYSGTYGDVELVKNVKAELKQAKLYYGGGISNAEQAEEMAQHADTVVVGNIIYDDIKAALKTVKAVKGE</sequence>
<protein>
    <recommendedName>
        <fullName evidence="1">Heptaprenylglyceryl phosphate synthase</fullName>
        <shortName evidence="1">HepGP synthase</shortName>
        <ecNumber evidence="1">2.5.1.n9</ecNumber>
    </recommendedName>
    <alternativeName>
        <fullName evidence="1">Glycerol-1-phosphate heptaprenyltransferase</fullName>
    </alternativeName>
</protein>
<gene>
    <name evidence="1" type="primary">pcrB</name>
    <name type="ordered locus">BT9727_0274</name>
</gene>
<organism>
    <name type="scientific">Bacillus thuringiensis subsp. konkukian (strain 97-27)</name>
    <dbReference type="NCBI Taxonomy" id="281309"/>
    <lineage>
        <taxon>Bacteria</taxon>
        <taxon>Bacillati</taxon>
        <taxon>Bacillota</taxon>
        <taxon>Bacilli</taxon>
        <taxon>Bacillales</taxon>
        <taxon>Bacillaceae</taxon>
        <taxon>Bacillus</taxon>
        <taxon>Bacillus cereus group</taxon>
    </lineage>
</organism>